<gene>
    <name type="primary">ahpF</name>
    <name type="ordered locus">b0606</name>
    <name type="ordered locus">JW0599</name>
</gene>
<organism>
    <name type="scientific">Escherichia coli (strain K12)</name>
    <dbReference type="NCBI Taxonomy" id="83333"/>
    <lineage>
        <taxon>Bacteria</taxon>
        <taxon>Pseudomonadati</taxon>
        <taxon>Pseudomonadota</taxon>
        <taxon>Gammaproteobacteria</taxon>
        <taxon>Enterobacterales</taxon>
        <taxon>Enterobacteriaceae</taxon>
        <taxon>Escherichia</taxon>
    </lineage>
</organism>
<accession>P35340</accession>
<accession>P77251</accession>
<accession>P77462</accession>
<name>AHPF_ECOLI</name>
<sequence>MLDTNMKTQLKAYLEKLTKPVELIATLDDSAKSAEIKELLAEIAELSDKVTFKEDNSLPVRKPSFLITNPGSNQGPRFAGSPLGHEFTSLVLALLWTGGHPSKEAQSLLEQIRHIDGDFEFETYYSLSCHNCPDVVQALNLMSVLNPRIKHTAIDGGTFQNEITDRNVMGVPAVFVNGKEFGQGRMTLTEIVAKIDTGAEKRAAEELNKRDAYDVLIVGSGPAGAAAAIYSARKGIRTGLMGERFGGQILDTVDIENYISVPKTEGQKLAGALKVHVDEYDVDVIDSQSASKLIPAAVEGGLHQIETASGAVLKARSIIVATGAKWRNMNVPGEDQYRTKGVTYCPHCDGPLFKGKRVAVIGGGNSGVEAAIDLAGIVEHVTLLEFAPEMKADQVLQDKLRSLKNVDIILNAQTTEVKGDGSKVVGLEYRDRVSGDIHNIELAGIFVQIGLLPNTNWLEGAVERNRMGEIIIDAKCETNVKGVFAAGDCTTVPYKQIIIATGEGAKASLSAFDYLIRTKTA</sequence>
<comment type="function">
    <text>Serves to protect the cell against DNA damage by alkyl hydroperoxides. It can use either NADH or NADPH as electron donor for direct reduction of redox dyes or of alkyl hydroperoxides when combined with the AhpC protein.</text>
</comment>
<comment type="cofactor">
    <cofactor evidence="1">
        <name>FAD</name>
        <dbReference type="ChEBI" id="CHEBI:57692"/>
    </cofactor>
    <text evidence="1">Binds 1 FAD per subunit.</text>
</comment>
<comment type="subunit">
    <text>Homodimer.</text>
</comment>
<comment type="miscellaneous">
    <text>The active site is a redox-active disulfide bond.</text>
</comment>
<comment type="similarity">
    <text evidence="3">Belongs to the class-II pyridine nucleotide-disulfide oxidoreductase family.</text>
</comment>
<comment type="sequence caution" evidence="3">
    <conflict type="erroneous initiation">
        <sequence resource="EMBL-CDS" id="AAB40807"/>
    </conflict>
    <text>Extended N-terminus.</text>
</comment>
<keyword id="KW-0002">3D-structure</keyword>
<keyword id="KW-0007">Acetylation</keyword>
<keyword id="KW-1015">Disulfide bond</keyword>
<keyword id="KW-0274">FAD</keyword>
<keyword id="KW-0285">Flavoprotein</keyword>
<keyword id="KW-0520">NAD</keyword>
<keyword id="KW-0521">NADP</keyword>
<keyword id="KW-0560">Oxidoreductase</keyword>
<keyword id="KW-0676">Redox-active center</keyword>
<keyword id="KW-1185">Reference proteome</keyword>
<proteinExistence type="evidence at protein level"/>
<protein>
    <recommendedName>
        <fullName>Alkyl hydroperoxide reductase subunit F</fullName>
        <ecNumber>1.8.1.-</ecNumber>
    </recommendedName>
    <alternativeName>
        <fullName>Alkyl hydroperoxide reductase F52A protein</fullName>
    </alternativeName>
</protein>
<evidence type="ECO:0000250" key="1"/>
<evidence type="ECO:0000269" key="2">
    <source>
    </source>
</evidence>
<evidence type="ECO:0000305" key="3"/>
<evidence type="ECO:0007829" key="4">
    <source>
        <dbReference type="PDB" id="1FL2"/>
    </source>
</evidence>
<evidence type="ECO:0007829" key="5">
    <source>
        <dbReference type="PDB" id="4O5Q"/>
    </source>
</evidence>
<reference key="1">
    <citation type="journal article" date="1996" name="DNA Res.">
        <title>A 718-kb DNA sequence of the Escherichia coli K-12 genome corresponding to the 12.7-28.0 min region on the linkage map.</title>
        <authorList>
            <person name="Oshima T."/>
            <person name="Aiba H."/>
            <person name="Baba T."/>
            <person name="Fujita K."/>
            <person name="Hayashi K."/>
            <person name="Honjo A."/>
            <person name="Ikemoto K."/>
            <person name="Inada T."/>
            <person name="Itoh T."/>
            <person name="Kajihara M."/>
            <person name="Kanai K."/>
            <person name="Kashimoto K."/>
            <person name="Kimura S."/>
            <person name="Kitagawa M."/>
            <person name="Makino K."/>
            <person name="Masuda S."/>
            <person name="Miki T."/>
            <person name="Mizobuchi K."/>
            <person name="Mori H."/>
            <person name="Motomura K."/>
            <person name="Nakamura Y."/>
            <person name="Nashimoto H."/>
            <person name="Nishio Y."/>
            <person name="Saito N."/>
            <person name="Sampei G."/>
            <person name="Seki Y."/>
            <person name="Tagami H."/>
            <person name="Takemoto K."/>
            <person name="Wada C."/>
            <person name="Yamamoto Y."/>
            <person name="Yano M."/>
            <person name="Horiuchi T."/>
        </authorList>
    </citation>
    <scope>NUCLEOTIDE SEQUENCE [LARGE SCALE GENOMIC DNA]</scope>
    <source>
        <strain>K12 / W3110 / ATCC 27325 / DSM 5911</strain>
    </source>
</reference>
<reference key="2">
    <citation type="submission" date="1997-01" db="EMBL/GenBank/DDBJ databases">
        <title>Sequence of minutes 4-25 of Escherichia coli.</title>
        <authorList>
            <person name="Chung E."/>
            <person name="Allen E."/>
            <person name="Araujo R."/>
            <person name="Aparicio A.M."/>
            <person name="Davis K."/>
            <person name="Duncan M."/>
            <person name="Federspiel N."/>
            <person name="Hyman R."/>
            <person name="Kalman S."/>
            <person name="Komp C."/>
            <person name="Kurdi O."/>
            <person name="Lew H."/>
            <person name="Lin D."/>
            <person name="Namath A."/>
            <person name="Oefner P."/>
            <person name="Roberts D."/>
            <person name="Schramm S."/>
            <person name="Davis R.W."/>
        </authorList>
    </citation>
    <scope>NUCLEOTIDE SEQUENCE [LARGE SCALE GENOMIC DNA]</scope>
    <source>
        <strain>K12 / MG1655 / ATCC 47076</strain>
    </source>
</reference>
<reference key="3">
    <citation type="journal article" date="1997" name="Science">
        <title>The complete genome sequence of Escherichia coli K-12.</title>
        <authorList>
            <person name="Blattner F.R."/>
            <person name="Plunkett G. III"/>
            <person name="Bloch C.A."/>
            <person name="Perna N.T."/>
            <person name="Burland V."/>
            <person name="Riley M."/>
            <person name="Collado-Vides J."/>
            <person name="Glasner J.D."/>
            <person name="Rode C.K."/>
            <person name="Mayhew G.F."/>
            <person name="Gregor J."/>
            <person name="Davis N.W."/>
            <person name="Kirkpatrick H.A."/>
            <person name="Goeden M.A."/>
            <person name="Rose D.J."/>
            <person name="Mau B."/>
            <person name="Shao Y."/>
        </authorList>
    </citation>
    <scope>NUCLEOTIDE SEQUENCE [LARGE SCALE GENOMIC DNA]</scope>
    <source>
        <strain>K12 / MG1655 / ATCC 47076</strain>
    </source>
</reference>
<reference key="4">
    <citation type="journal article" date="2006" name="Mol. Syst. Biol.">
        <title>Highly accurate genome sequences of Escherichia coli K-12 strains MG1655 and W3110.</title>
        <authorList>
            <person name="Hayashi K."/>
            <person name="Morooka N."/>
            <person name="Yamamoto Y."/>
            <person name="Fujita K."/>
            <person name="Isono K."/>
            <person name="Choi S."/>
            <person name="Ohtsubo E."/>
            <person name="Baba T."/>
            <person name="Wanner B.L."/>
            <person name="Mori H."/>
            <person name="Horiuchi T."/>
        </authorList>
    </citation>
    <scope>NUCLEOTIDE SEQUENCE [LARGE SCALE GENOMIC DNA]</scope>
    <source>
        <strain>K12 / W3110 / ATCC 27325 / DSM 5911</strain>
    </source>
</reference>
<reference key="5">
    <citation type="journal article" date="1992" name="J. Bacteriol.">
        <title>Locations of genes encoding alkyl hydroperoxide reductase on the physical map of the Escherichia coli K-12 genome.</title>
        <authorList>
            <person name="Smillie D.A."/>
            <person name="Hayward R.S."/>
            <person name="Suzuki T."/>
            <person name="Fujita N."/>
            <person name="Ishihama A."/>
        </authorList>
    </citation>
    <scope>NUCLEOTIDE SEQUENCE [GENOMIC DNA] OF 1-162</scope>
    <source>
        <strain>K12</strain>
    </source>
</reference>
<reference key="6">
    <citation type="journal article" date="2009" name="Mol. Cell. Proteomics">
        <title>Lysine acetylation is a highly abundant and evolutionarily conserved modification in Escherichia coli.</title>
        <authorList>
            <person name="Zhang J."/>
            <person name="Sprung R."/>
            <person name="Pei J."/>
            <person name="Tan X."/>
            <person name="Kim S."/>
            <person name="Zhu H."/>
            <person name="Liu C.F."/>
            <person name="Grishin N.V."/>
            <person name="Zhao Y."/>
        </authorList>
    </citation>
    <scope>ACETYLATION [LARGE SCALE ANALYSIS] AT LYS-53 AND LYS-354</scope>
    <scope>IDENTIFICATION BY MASS SPECTROMETRY</scope>
    <source>
        <strain>K12 / JW1106</strain>
        <strain>K12 / MG1655 / ATCC 47076</strain>
    </source>
</reference>
<dbReference type="EC" id="1.8.1.-"/>
<dbReference type="EMBL" id="U82598">
    <property type="protein sequence ID" value="AAB40807.1"/>
    <property type="status" value="ALT_INIT"/>
    <property type="molecule type" value="Genomic_DNA"/>
</dbReference>
<dbReference type="EMBL" id="U00096">
    <property type="protein sequence ID" value="AAC73707.2"/>
    <property type="molecule type" value="Genomic_DNA"/>
</dbReference>
<dbReference type="EMBL" id="AP009048">
    <property type="protein sequence ID" value="BAA35236.1"/>
    <property type="molecule type" value="Genomic_DNA"/>
</dbReference>
<dbReference type="EMBL" id="D13187">
    <property type="protein sequence ID" value="BAA02486.1"/>
    <property type="molecule type" value="Genomic_DNA"/>
</dbReference>
<dbReference type="RefSeq" id="NP_415139.2">
    <property type="nucleotide sequence ID" value="NC_000913.3"/>
</dbReference>
<dbReference type="RefSeq" id="WP_000887629.1">
    <property type="nucleotide sequence ID" value="NZ_STEB01000031.1"/>
</dbReference>
<dbReference type="PDB" id="1FL2">
    <property type="method" value="X-ray"/>
    <property type="resolution" value="1.90 A"/>
    <property type="chains" value="A=212-521"/>
</dbReference>
<dbReference type="PDB" id="4O5Q">
    <property type="method" value="X-ray"/>
    <property type="resolution" value="2.00 A"/>
    <property type="chains" value="A=1-521"/>
</dbReference>
<dbReference type="PDB" id="4O5U">
    <property type="method" value="X-ray"/>
    <property type="resolution" value="2.65 A"/>
    <property type="chains" value="A=1-521"/>
</dbReference>
<dbReference type="PDB" id="4XVG">
    <property type="method" value="X-ray"/>
    <property type="resolution" value="2.20 A"/>
    <property type="chains" value="A=1-521"/>
</dbReference>
<dbReference type="PDB" id="4YKF">
    <property type="method" value="X-ray"/>
    <property type="resolution" value="2.50 A"/>
    <property type="chains" value="A=1-521"/>
</dbReference>
<dbReference type="PDB" id="4YKG">
    <property type="method" value="X-ray"/>
    <property type="resolution" value="2.40 A"/>
    <property type="chains" value="A=1-521"/>
</dbReference>
<dbReference type="PDBsum" id="1FL2"/>
<dbReference type="PDBsum" id="4O5Q"/>
<dbReference type="PDBsum" id="4O5U"/>
<dbReference type="PDBsum" id="4XVG"/>
<dbReference type="PDBsum" id="4YKF"/>
<dbReference type="PDBsum" id="4YKG"/>
<dbReference type="SMR" id="P35340"/>
<dbReference type="BioGRID" id="4260706">
    <property type="interactions" value="32"/>
</dbReference>
<dbReference type="BioGRID" id="851857">
    <property type="interactions" value="1"/>
</dbReference>
<dbReference type="ComplexPortal" id="CPX-4862">
    <property type="entry name" value="Alkyl hydroperoxide reductase complex"/>
</dbReference>
<dbReference type="DIP" id="DIP-9077N"/>
<dbReference type="FunCoup" id="P35340">
    <property type="interactions" value="141"/>
</dbReference>
<dbReference type="IntAct" id="P35340">
    <property type="interactions" value="21"/>
</dbReference>
<dbReference type="STRING" id="511145.b0606"/>
<dbReference type="DrugBank" id="DB03147">
    <property type="generic name" value="Flavin adenine dinucleotide"/>
</dbReference>
<dbReference type="iPTMnet" id="P35340"/>
<dbReference type="jPOST" id="P35340"/>
<dbReference type="PaxDb" id="511145-b0606"/>
<dbReference type="EnsemblBacteria" id="AAC73707">
    <property type="protein sequence ID" value="AAC73707"/>
    <property type="gene ID" value="b0606"/>
</dbReference>
<dbReference type="GeneID" id="93776878"/>
<dbReference type="GeneID" id="947540"/>
<dbReference type="KEGG" id="ecj:JW0599"/>
<dbReference type="KEGG" id="eco:b0606"/>
<dbReference type="KEGG" id="ecoc:C3026_03030"/>
<dbReference type="PATRIC" id="fig|511145.12.peg.636"/>
<dbReference type="EchoBASE" id="EB1358"/>
<dbReference type="eggNOG" id="COG3634">
    <property type="taxonomic scope" value="Bacteria"/>
</dbReference>
<dbReference type="HOGENOM" id="CLU_031864_0_0_6"/>
<dbReference type="InParanoid" id="P35340"/>
<dbReference type="OMA" id="LNPNIRH"/>
<dbReference type="OrthoDB" id="9806179at2"/>
<dbReference type="PhylomeDB" id="P35340"/>
<dbReference type="BioCyc" id="EcoCyc:EG11385-MONOMER"/>
<dbReference type="BioCyc" id="MetaCyc:EG11385-MONOMER"/>
<dbReference type="BRENDA" id="1.11.1.26">
    <property type="organism ID" value="2026"/>
</dbReference>
<dbReference type="EvolutionaryTrace" id="P35340"/>
<dbReference type="PRO" id="PR:P35340"/>
<dbReference type="Proteomes" id="UP000000625">
    <property type="component" value="Chromosome"/>
</dbReference>
<dbReference type="GO" id="GO:0009321">
    <property type="term" value="C:alkyl hydroperoxide reductase complex"/>
    <property type="evidence" value="ECO:0000314"/>
    <property type="project" value="EcoCyc"/>
</dbReference>
<dbReference type="GO" id="GO:0005829">
    <property type="term" value="C:cytosol"/>
    <property type="evidence" value="ECO:0000314"/>
    <property type="project" value="EcoCyc"/>
</dbReference>
<dbReference type="GO" id="GO:0008785">
    <property type="term" value="F:alkyl hydroperoxide reductase activity"/>
    <property type="evidence" value="ECO:0000316"/>
    <property type="project" value="EcoliWiki"/>
</dbReference>
<dbReference type="GO" id="GO:0071949">
    <property type="term" value="F:FAD binding"/>
    <property type="evidence" value="ECO:0000314"/>
    <property type="project" value="EcoCyc"/>
</dbReference>
<dbReference type="GO" id="GO:0051287">
    <property type="term" value="F:NAD binding"/>
    <property type="evidence" value="ECO:0007669"/>
    <property type="project" value="InterPro"/>
</dbReference>
<dbReference type="GO" id="GO:0102039">
    <property type="term" value="F:NADH-dependent peroxiredoxin activity"/>
    <property type="evidence" value="ECO:0007669"/>
    <property type="project" value="InterPro"/>
</dbReference>
<dbReference type="GO" id="GO:0004791">
    <property type="term" value="F:thioredoxin-disulfide reductase (NADPH) activity"/>
    <property type="evidence" value="ECO:0000318"/>
    <property type="project" value="GO_Central"/>
</dbReference>
<dbReference type="GO" id="GO:0045454">
    <property type="term" value="P:cell redox homeostasis"/>
    <property type="evidence" value="ECO:0000318"/>
    <property type="project" value="GO_Central"/>
</dbReference>
<dbReference type="GO" id="GO:0042744">
    <property type="term" value="P:hydrogen peroxide catabolic process"/>
    <property type="evidence" value="ECO:0000314"/>
    <property type="project" value="ComplexPortal"/>
</dbReference>
<dbReference type="GO" id="GO:0006979">
    <property type="term" value="P:response to oxidative stress"/>
    <property type="evidence" value="ECO:0000303"/>
    <property type="project" value="ComplexPortal"/>
</dbReference>
<dbReference type="GO" id="GO:0000302">
    <property type="term" value="P:response to reactive oxygen species"/>
    <property type="evidence" value="ECO:0007669"/>
    <property type="project" value="InterPro"/>
</dbReference>
<dbReference type="CDD" id="cd03026">
    <property type="entry name" value="AhpF_NTD_C"/>
    <property type="match status" value="1"/>
</dbReference>
<dbReference type="CDD" id="cd02974">
    <property type="entry name" value="AhpF_NTD_N"/>
    <property type="match status" value="1"/>
</dbReference>
<dbReference type="FunFam" id="3.40.30.80:FF:000001">
    <property type="entry name" value="Alkyl hydroperoxide reductase subunit F"/>
    <property type="match status" value="1"/>
</dbReference>
<dbReference type="FunFam" id="3.50.50.60:FF:000007">
    <property type="entry name" value="Alkyl hydroperoxide reductase, F subunit"/>
    <property type="match status" value="1"/>
</dbReference>
<dbReference type="Gene3D" id="3.40.30.80">
    <property type="match status" value="1"/>
</dbReference>
<dbReference type="Gene3D" id="3.50.50.60">
    <property type="entry name" value="FAD/NAD(P)-binding domain"/>
    <property type="match status" value="2"/>
</dbReference>
<dbReference type="InterPro" id="IPR044141">
    <property type="entry name" value="AhpF_NTD_C"/>
</dbReference>
<dbReference type="InterPro" id="IPR044142">
    <property type="entry name" value="AhpF_NTD_N"/>
</dbReference>
<dbReference type="InterPro" id="IPR012081">
    <property type="entry name" value="Alkyl_hydroperoxide_Rdtase_suF"/>
</dbReference>
<dbReference type="InterPro" id="IPR036188">
    <property type="entry name" value="FAD/NAD-bd_sf"/>
</dbReference>
<dbReference type="InterPro" id="IPR023753">
    <property type="entry name" value="FAD/NAD-binding_dom"/>
</dbReference>
<dbReference type="InterPro" id="IPR050097">
    <property type="entry name" value="Ferredoxin-NADP_redctase_2"/>
</dbReference>
<dbReference type="InterPro" id="IPR008255">
    <property type="entry name" value="Pyr_nucl-diS_OxRdtase_2_AS"/>
</dbReference>
<dbReference type="InterPro" id="IPR012336">
    <property type="entry name" value="Thioredoxin-like_fold"/>
</dbReference>
<dbReference type="InterPro" id="IPR036249">
    <property type="entry name" value="Thioredoxin-like_sf"/>
</dbReference>
<dbReference type="NCBIfam" id="TIGR03140">
    <property type="entry name" value="AhpF"/>
    <property type="match status" value="1"/>
</dbReference>
<dbReference type="PANTHER" id="PTHR48105">
    <property type="entry name" value="THIOREDOXIN REDUCTASE 1-RELATED-RELATED"/>
    <property type="match status" value="1"/>
</dbReference>
<dbReference type="Pfam" id="PF07992">
    <property type="entry name" value="Pyr_redox_2"/>
    <property type="match status" value="1"/>
</dbReference>
<dbReference type="Pfam" id="PF13192">
    <property type="entry name" value="Thioredoxin_3"/>
    <property type="match status" value="1"/>
</dbReference>
<dbReference type="PIRSF" id="PIRSF000238">
    <property type="entry name" value="AhpF"/>
    <property type="match status" value="1"/>
</dbReference>
<dbReference type="PRINTS" id="PR00368">
    <property type="entry name" value="FADPNR"/>
</dbReference>
<dbReference type="PRINTS" id="PR00469">
    <property type="entry name" value="PNDRDTASEII"/>
</dbReference>
<dbReference type="SUPFAM" id="SSF51905">
    <property type="entry name" value="FAD/NAD(P)-binding domain"/>
    <property type="match status" value="1"/>
</dbReference>
<dbReference type="SUPFAM" id="SSF52833">
    <property type="entry name" value="Thioredoxin-like"/>
    <property type="match status" value="2"/>
</dbReference>
<dbReference type="PROSITE" id="PS51354">
    <property type="entry name" value="GLUTAREDOXIN_2"/>
    <property type="match status" value="1"/>
</dbReference>
<dbReference type="PROSITE" id="PS00573">
    <property type="entry name" value="PYRIDINE_REDOX_2"/>
    <property type="match status" value="1"/>
</dbReference>
<feature type="chain" id="PRO_0000166774" description="Alkyl hydroperoxide reductase subunit F">
    <location>
        <begin position="1"/>
        <end position="521"/>
    </location>
</feature>
<feature type="binding site" evidence="1">
    <location>
        <begin position="214"/>
        <end position="229"/>
    </location>
    <ligand>
        <name>FAD</name>
        <dbReference type="ChEBI" id="CHEBI:57692"/>
    </ligand>
</feature>
<feature type="binding site" evidence="1">
    <location>
        <begin position="357"/>
        <end position="371"/>
    </location>
    <ligand>
        <name>NAD(+)</name>
        <dbReference type="ChEBI" id="CHEBI:57540"/>
    </ligand>
</feature>
<feature type="binding site" evidence="1">
    <location>
        <begin position="478"/>
        <end position="488"/>
    </location>
    <ligand>
        <name>FAD</name>
        <dbReference type="ChEBI" id="CHEBI:57692"/>
    </ligand>
</feature>
<feature type="modified residue" description="N6-acetyllysine" evidence="2">
    <location>
        <position position="53"/>
    </location>
</feature>
<feature type="modified residue" description="N6-acetyllysine" evidence="2">
    <location>
        <position position="354"/>
    </location>
</feature>
<feature type="disulfide bond" description="Redox-active" evidence="1">
    <location>
        <begin position="345"/>
        <end position="348"/>
    </location>
</feature>
<feature type="helix" evidence="5">
    <location>
        <begin position="4"/>
        <end position="15"/>
    </location>
</feature>
<feature type="strand" evidence="5">
    <location>
        <begin position="21"/>
        <end position="26"/>
    </location>
</feature>
<feature type="helix" evidence="5">
    <location>
        <begin position="31"/>
        <end position="44"/>
    </location>
</feature>
<feature type="strand" evidence="5">
    <location>
        <begin position="50"/>
        <end position="54"/>
    </location>
</feature>
<feature type="strand" evidence="5">
    <location>
        <begin position="58"/>
        <end position="60"/>
    </location>
</feature>
<feature type="strand" evidence="5">
    <location>
        <begin position="62"/>
        <end position="68"/>
    </location>
</feature>
<feature type="strand" evidence="5">
    <location>
        <begin position="77"/>
        <end position="80"/>
    </location>
</feature>
<feature type="helix" evidence="5">
    <location>
        <begin position="84"/>
        <end position="86"/>
    </location>
</feature>
<feature type="helix" evidence="5">
    <location>
        <begin position="87"/>
        <end position="97"/>
    </location>
</feature>
<feature type="helix" evidence="5">
    <location>
        <begin position="106"/>
        <end position="113"/>
    </location>
</feature>
<feature type="strand" evidence="5">
    <location>
        <begin position="119"/>
        <end position="125"/>
    </location>
</feature>
<feature type="helix" evidence="5">
    <location>
        <begin position="132"/>
        <end position="145"/>
    </location>
</feature>
<feature type="strand" evidence="5">
    <location>
        <begin position="149"/>
        <end position="155"/>
    </location>
</feature>
<feature type="turn" evidence="5">
    <location>
        <begin position="156"/>
        <end position="158"/>
    </location>
</feature>
<feature type="helix" evidence="5">
    <location>
        <begin position="160"/>
        <end position="165"/>
    </location>
</feature>
<feature type="strand" evidence="5">
    <location>
        <begin position="170"/>
        <end position="176"/>
    </location>
</feature>
<feature type="strand" evidence="5">
    <location>
        <begin position="179"/>
        <end position="185"/>
    </location>
</feature>
<feature type="helix" evidence="5">
    <location>
        <begin position="188"/>
        <end position="195"/>
    </location>
</feature>
<feature type="helix" evidence="5">
    <location>
        <begin position="203"/>
        <end position="208"/>
    </location>
</feature>
<feature type="strand" evidence="4">
    <location>
        <begin position="213"/>
        <end position="218"/>
    </location>
</feature>
<feature type="helix" evidence="4">
    <location>
        <begin position="222"/>
        <end position="232"/>
    </location>
</feature>
<feature type="turn" evidence="4">
    <location>
        <begin position="233"/>
        <end position="235"/>
    </location>
</feature>
<feature type="strand" evidence="4">
    <location>
        <begin position="238"/>
        <end position="241"/>
    </location>
</feature>
<feature type="helix" evidence="4">
    <location>
        <begin position="247"/>
        <end position="251"/>
    </location>
</feature>
<feature type="strand" evidence="4">
    <location>
        <begin position="261"/>
        <end position="265"/>
    </location>
</feature>
<feature type="helix" evidence="4">
    <location>
        <begin position="266"/>
        <end position="278"/>
    </location>
</feature>
<feature type="turn" evidence="5">
    <location>
        <begin position="279"/>
        <end position="281"/>
    </location>
</feature>
<feature type="strand" evidence="4">
    <location>
        <begin position="282"/>
        <end position="285"/>
    </location>
</feature>
<feature type="strand" evidence="4">
    <location>
        <begin position="290"/>
        <end position="294"/>
    </location>
</feature>
<feature type="strand" evidence="4">
    <location>
        <begin position="303"/>
        <end position="307"/>
    </location>
</feature>
<feature type="strand" evidence="4">
    <location>
        <begin position="312"/>
        <end position="320"/>
    </location>
</feature>
<feature type="strand" evidence="4">
    <location>
        <begin position="324"/>
        <end position="326"/>
    </location>
</feature>
<feature type="turn" evidence="4">
    <location>
        <begin position="332"/>
        <end position="337"/>
    </location>
</feature>
<feature type="turn" evidence="4">
    <location>
        <begin position="339"/>
        <end position="341"/>
    </location>
</feature>
<feature type="strand" evidence="4">
    <location>
        <begin position="342"/>
        <end position="344"/>
    </location>
</feature>
<feature type="helix" evidence="4">
    <location>
        <begin position="346"/>
        <end position="349"/>
    </location>
</feature>
<feature type="helix" evidence="4">
    <location>
        <begin position="350"/>
        <end position="353"/>
    </location>
</feature>
<feature type="strand" evidence="4">
    <location>
        <begin position="357"/>
        <end position="361"/>
    </location>
</feature>
<feature type="helix" evidence="4">
    <location>
        <begin position="365"/>
        <end position="375"/>
    </location>
</feature>
<feature type="strand" evidence="4">
    <location>
        <begin position="378"/>
        <end position="384"/>
    </location>
</feature>
<feature type="strand" evidence="4">
    <location>
        <begin position="386"/>
        <end position="389"/>
    </location>
</feature>
<feature type="helix" evidence="4">
    <location>
        <begin position="394"/>
        <end position="401"/>
    </location>
</feature>
<feature type="strand" evidence="4">
    <location>
        <begin position="406"/>
        <end position="431"/>
    </location>
</feature>
<feature type="turn" evidence="4">
    <location>
        <begin position="432"/>
        <end position="434"/>
    </location>
</feature>
<feature type="strand" evidence="4">
    <location>
        <begin position="437"/>
        <end position="441"/>
    </location>
</feature>
<feature type="strand" evidence="4">
    <location>
        <begin position="443"/>
        <end position="447"/>
    </location>
</feature>
<feature type="strand" evidence="4">
    <location>
        <begin position="451"/>
        <end position="454"/>
    </location>
</feature>
<feature type="helix" evidence="4">
    <location>
        <begin position="456"/>
        <end position="458"/>
    </location>
</feature>
<feature type="turn" evidence="4">
    <location>
        <begin position="459"/>
        <end position="461"/>
    </location>
</feature>
<feature type="strand" evidence="4">
    <location>
        <begin position="483"/>
        <end position="485"/>
    </location>
</feature>
<feature type="helix" evidence="4">
    <location>
        <begin position="497"/>
        <end position="517"/>
    </location>
</feature>